<sequence length="250" mass="27009">MSDLQTQMDLEQQGVLFTTINKLYNWGRRSSVWPMQFGLACCAIEMIAAAASRYDISRFGSELFRASPRQADVMIVAGTVTKKMVPQVVRLFNQMPEPRYVISMGACATSGGPFRDGYNVVRGVDLYVPVDVYIPGCPPRPEALLHALMTLQAQIDVQSLQQVRWYGDDEGVVNEFPVPIFGAEGLEVPGIPGTADPVGGTPKMPPFVSPALGGKGERDASIKALEGNQPKPMLRAGTVTIEEVAHGIAG</sequence>
<dbReference type="EC" id="7.1.1.-" evidence="1"/>
<dbReference type="EMBL" id="CP000875">
    <property type="protein sequence ID" value="ABX07611.1"/>
    <property type="molecule type" value="Genomic_DNA"/>
</dbReference>
<dbReference type="SMR" id="A9B478"/>
<dbReference type="STRING" id="316274.Haur_4981"/>
<dbReference type="KEGG" id="hau:Haur_4981"/>
<dbReference type="eggNOG" id="COG0377">
    <property type="taxonomic scope" value="Bacteria"/>
</dbReference>
<dbReference type="HOGENOM" id="CLU_055737_3_0_0"/>
<dbReference type="InParanoid" id="A9B478"/>
<dbReference type="Proteomes" id="UP000000787">
    <property type="component" value="Chromosome"/>
</dbReference>
<dbReference type="GO" id="GO:0005886">
    <property type="term" value="C:plasma membrane"/>
    <property type="evidence" value="ECO:0007669"/>
    <property type="project" value="UniProtKB-SubCell"/>
</dbReference>
<dbReference type="GO" id="GO:0045271">
    <property type="term" value="C:respiratory chain complex I"/>
    <property type="evidence" value="ECO:0007669"/>
    <property type="project" value="TreeGrafter"/>
</dbReference>
<dbReference type="GO" id="GO:0051539">
    <property type="term" value="F:4 iron, 4 sulfur cluster binding"/>
    <property type="evidence" value="ECO:0007669"/>
    <property type="project" value="UniProtKB-KW"/>
</dbReference>
<dbReference type="GO" id="GO:0005506">
    <property type="term" value="F:iron ion binding"/>
    <property type="evidence" value="ECO:0007669"/>
    <property type="project" value="UniProtKB-UniRule"/>
</dbReference>
<dbReference type="GO" id="GO:0008137">
    <property type="term" value="F:NADH dehydrogenase (ubiquinone) activity"/>
    <property type="evidence" value="ECO:0007669"/>
    <property type="project" value="InterPro"/>
</dbReference>
<dbReference type="GO" id="GO:0050136">
    <property type="term" value="F:NADH:ubiquinone reductase (non-electrogenic) activity"/>
    <property type="evidence" value="ECO:0007669"/>
    <property type="project" value="UniProtKB-UniRule"/>
</dbReference>
<dbReference type="GO" id="GO:0048038">
    <property type="term" value="F:quinone binding"/>
    <property type="evidence" value="ECO:0007669"/>
    <property type="project" value="UniProtKB-KW"/>
</dbReference>
<dbReference type="GO" id="GO:0009060">
    <property type="term" value="P:aerobic respiration"/>
    <property type="evidence" value="ECO:0007669"/>
    <property type="project" value="TreeGrafter"/>
</dbReference>
<dbReference type="GO" id="GO:0015990">
    <property type="term" value="P:electron transport coupled proton transport"/>
    <property type="evidence" value="ECO:0007669"/>
    <property type="project" value="TreeGrafter"/>
</dbReference>
<dbReference type="FunFam" id="3.40.50.12280:FF:000002">
    <property type="entry name" value="NADH-quinone oxidoreductase subunit B"/>
    <property type="match status" value="1"/>
</dbReference>
<dbReference type="Gene3D" id="3.40.50.12280">
    <property type="match status" value="1"/>
</dbReference>
<dbReference type="HAMAP" id="MF_01356">
    <property type="entry name" value="NDH1_NuoB"/>
    <property type="match status" value="1"/>
</dbReference>
<dbReference type="InterPro" id="IPR006137">
    <property type="entry name" value="NADH_UbQ_OxRdtase-like_20kDa"/>
</dbReference>
<dbReference type="InterPro" id="IPR006138">
    <property type="entry name" value="NADH_UQ_OxRdtase_20Kd_su"/>
</dbReference>
<dbReference type="NCBIfam" id="TIGR01957">
    <property type="entry name" value="nuoB_fam"/>
    <property type="match status" value="1"/>
</dbReference>
<dbReference type="NCBIfam" id="NF005012">
    <property type="entry name" value="PRK06411.1"/>
    <property type="match status" value="1"/>
</dbReference>
<dbReference type="NCBIfam" id="NF011394">
    <property type="entry name" value="PRK14819.1"/>
    <property type="match status" value="1"/>
</dbReference>
<dbReference type="PANTHER" id="PTHR11995">
    <property type="entry name" value="NADH DEHYDROGENASE"/>
    <property type="match status" value="1"/>
</dbReference>
<dbReference type="PANTHER" id="PTHR11995:SF33">
    <property type="entry name" value="NADH-QUINONE OXIDOREDUCTASE SUBUNIT B 2"/>
    <property type="match status" value="1"/>
</dbReference>
<dbReference type="Pfam" id="PF01058">
    <property type="entry name" value="Oxidored_q6"/>
    <property type="match status" value="1"/>
</dbReference>
<dbReference type="SUPFAM" id="SSF56770">
    <property type="entry name" value="HydA/Nqo6-like"/>
    <property type="match status" value="1"/>
</dbReference>
<name>NUOB2_HERA2</name>
<gene>
    <name evidence="1" type="primary">nuoB2</name>
    <name type="ordered locus">Haur_4981</name>
</gene>
<keyword id="KW-0004">4Fe-4S</keyword>
<keyword id="KW-1003">Cell membrane</keyword>
<keyword id="KW-0408">Iron</keyword>
<keyword id="KW-0411">Iron-sulfur</keyword>
<keyword id="KW-0472">Membrane</keyword>
<keyword id="KW-0479">Metal-binding</keyword>
<keyword id="KW-0520">NAD</keyword>
<keyword id="KW-0874">Quinone</keyword>
<keyword id="KW-1278">Translocase</keyword>
<keyword id="KW-0813">Transport</keyword>
<keyword id="KW-0830">Ubiquinone</keyword>
<feature type="chain" id="PRO_0000376255" description="NADH-quinone oxidoreductase subunit B 2">
    <location>
        <begin position="1"/>
        <end position="250"/>
    </location>
</feature>
<feature type="binding site" evidence="1">
    <location>
        <position position="41"/>
    </location>
    <ligand>
        <name>[4Fe-4S] cluster</name>
        <dbReference type="ChEBI" id="CHEBI:49883"/>
    </ligand>
</feature>
<feature type="binding site" evidence="1">
    <location>
        <position position="42"/>
    </location>
    <ligand>
        <name>[4Fe-4S] cluster</name>
        <dbReference type="ChEBI" id="CHEBI:49883"/>
    </ligand>
</feature>
<feature type="binding site" evidence="1">
    <location>
        <position position="107"/>
    </location>
    <ligand>
        <name>[4Fe-4S] cluster</name>
        <dbReference type="ChEBI" id="CHEBI:49883"/>
    </ligand>
</feature>
<feature type="binding site" evidence="1">
    <location>
        <position position="137"/>
    </location>
    <ligand>
        <name>[4Fe-4S] cluster</name>
        <dbReference type="ChEBI" id="CHEBI:49883"/>
    </ligand>
</feature>
<organism>
    <name type="scientific">Herpetosiphon aurantiacus (strain ATCC 23779 / DSM 785 / 114-95)</name>
    <dbReference type="NCBI Taxonomy" id="316274"/>
    <lineage>
        <taxon>Bacteria</taxon>
        <taxon>Bacillati</taxon>
        <taxon>Chloroflexota</taxon>
        <taxon>Chloroflexia</taxon>
        <taxon>Herpetosiphonales</taxon>
        <taxon>Herpetosiphonaceae</taxon>
        <taxon>Herpetosiphon</taxon>
    </lineage>
</organism>
<proteinExistence type="inferred from homology"/>
<accession>A9B478</accession>
<reference key="1">
    <citation type="journal article" date="2011" name="Stand. Genomic Sci.">
        <title>Complete genome sequence of the filamentous gliding predatory bacterium Herpetosiphon aurantiacus type strain (114-95(T)).</title>
        <authorList>
            <person name="Kiss H."/>
            <person name="Nett M."/>
            <person name="Domin N."/>
            <person name="Martin K."/>
            <person name="Maresca J.A."/>
            <person name="Copeland A."/>
            <person name="Lapidus A."/>
            <person name="Lucas S."/>
            <person name="Berry K.W."/>
            <person name="Glavina Del Rio T."/>
            <person name="Dalin E."/>
            <person name="Tice H."/>
            <person name="Pitluck S."/>
            <person name="Richardson P."/>
            <person name="Bruce D."/>
            <person name="Goodwin L."/>
            <person name="Han C."/>
            <person name="Detter J.C."/>
            <person name="Schmutz J."/>
            <person name="Brettin T."/>
            <person name="Land M."/>
            <person name="Hauser L."/>
            <person name="Kyrpides N.C."/>
            <person name="Ivanova N."/>
            <person name="Goeker M."/>
            <person name="Woyke T."/>
            <person name="Klenk H.P."/>
            <person name="Bryant D.A."/>
        </authorList>
    </citation>
    <scope>NUCLEOTIDE SEQUENCE [LARGE SCALE GENOMIC DNA]</scope>
    <source>
        <strain>ATCC 23779 / DSM 785 / 114-95</strain>
    </source>
</reference>
<protein>
    <recommendedName>
        <fullName evidence="1">NADH-quinone oxidoreductase subunit B 2</fullName>
        <ecNumber evidence="1">7.1.1.-</ecNumber>
    </recommendedName>
    <alternativeName>
        <fullName evidence="1">NADH dehydrogenase I subunit B 2</fullName>
    </alternativeName>
    <alternativeName>
        <fullName evidence="1">NDH-1 subunit B 2</fullName>
    </alternativeName>
</protein>
<comment type="function">
    <text evidence="1">NDH-1 shuttles electrons from NADH, via FMN and iron-sulfur (Fe-S) centers, to quinones in the respiratory chain. The immediate electron acceptor for the enzyme in this species is believed to be ubiquinone. Couples the redox reaction to proton translocation (for every two electrons transferred, four hydrogen ions are translocated across the cytoplasmic membrane), and thus conserves the redox energy in a proton gradient.</text>
</comment>
<comment type="catalytic activity">
    <reaction evidence="1">
        <text>a quinone + NADH + 5 H(+)(in) = a quinol + NAD(+) + 4 H(+)(out)</text>
        <dbReference type="Rhea" id="RHEA:57888"/>
        <dbReference type="ChEBI" id="CHEBI:15378"/>
        <dbReference type="ChEBI" id="CHEBI:24646"/>
        <dbReference type="ChEBI" id="CHEBI:57540"/>
        <dbReference type="ChEBI" id="CHEBI:57945"/>
        <dbReference type="ChEBI" id="CHEBI:132124"/>
    </reaction>
</comment>
<comment type="cofactor">
    <cofactor evidence="1">
        <name>[4Fe-4S] cluster</name>
        <dbReference type="ChEBI" id="CHEBI:49883"/>
    </cofactor>
    <text evidence="1">Binds 1 [4Fe-4S] cluster.</text>
</comment>
<comment type="subunit">
    <text evidence="1">NDH-1 is composed of 14 different subunits. Subunits NuoB, C, D, E, F, and G constitute the peripheral sector of the complex.</text>
</comment>
<comment type="subcellular location">
    <subcellularLocation>
        <location evidence="1">Cell membrane</location>
        <topology evidence="1">Peripheral membrane protein</topology>
        <orientation evidence="1">Cytoplasmic side</orientation>
    </subcellularLocation>
</comment>
<comment type="similarity">
    <text evidence="1">Belongs to the complex I 20 kDa subunit family.</text>
</comment>
<evidence type="ECO:0000255" key="1">
    <source>
        <dbReference type="HAMAP-Rule" id="MF_01356"/>
    </source>
</evidence>